<gene>
    <name type="primary">Sec22c</name>
    <name type="synonym">Sec22l3</name>
</gene>
<feature type="chain" id="PRO_0000324162" description="Vesicle-trafficking protein SEC22c">
    <location>
        <begin position="1"/>
        <end position="303"/>
    </location>
</feature>
<feature type="topological domain" description="Cytoplasmic" evidence="2">
    <location>
        <begin position="1"/>
        <end position="183"/>
    </location>
</feature>
<feature type="transmembrane region" description="Helical" evidence="2">
    <location>
        <begin position="184"/>
        <end position="204"/>
    </location>
</feature>
<feature type="topological domain" description="Lumenal" evidence="2">
    <location>
        <begin position="205"/>
        <end position="223"/>
    </location>
</feature>
<feature type="transmembrane region" description="Helical" evidence="2">
    <location>
        <begin position="224"/>
        <end position="244"/>
    </location>
</feature>
<feature type="topological domain" description="Cytoplasmic" evidence="2">
    <location>
        <begin position="245"/>
        <end position="248"/>
    </location>
</feature>
<feature type="transmembrane region" description="Helical" evidence="2">
    <location>
        <begin position="249"/>
        <end position="269"/>
    </location>
</feature>
<feature type="topological domain" description="Lumenal" evidence="2">
    <location>
        <position position="270"/>
    </location>
</feature>
<feature type="transmembrane region" description="Helical" evidence="2">
    <location>
        <begin position="271"/>
        <end position="291"/>
    </location>
</feature>
<feature type="topological domain" description="Cytoplasmic" evidence="2">
    <location>
        <begin position="292"/>
        <end position="303"/>
    </location>
</feature>
<feature type="domain" description="Longin" evidence="3">
    <location>
        <begin position="8"/>
        <end position="119"/>
    </location>
</feature>
<feature type="sequence conflict" description="In Ref. 1; BAC27266." evidence="4" ref="1">
    <original>S</original>
    <variation>N</variation>
    <location>
        <position position="8"/>
    </location>
</feature>
<feature type="sequence conflict" description="In Ref. 1; BAC26717." evidence="4" ref="1">
    <original>D</original>
    <variation>E</variation>
    <location>
        <position position="14"/>
    </location>
</feature>
<feature type="sequence conflict" description="In Ref. 1; BAC26717." evidence="4" ref="1">
    <original>G</original>
    <variation>A</variation>
    <location>
        <position position="49"/>
    </location>
</feature>
<dbReference type="EMBL" id="AK029985">
    <property type="protein sequence ID" value="BAC26717.1"/>
    <property type="molecule type" value="mRNA"/>
</dbReference>
<dbReference type="EMBL" id="AK031125">
    <property type="protein sequence ID" value="BAC27266.1"/>
    <property type="molecule type" value="mRNA"/>
</dbReference>
<dbReference type="EMBL" id="AK044249">
    <property type="protein sequence ID" value="BAC31840.1"/>
    <property type="molecule type" value="mRNA"/>
</dbReference>
<dbReference type="EMBL" id="BC046289">
    <property type="protein sequence ID" value="AAH46289.1"/>
    <property type="molecule type" value="mRNA"/>
</dbReference>
<dbReference type="CCDS" id="CCDS23634.1"/>
<dbReference type="RefSeq" id="NP_001158034.1">
    <property type="nucleotide sequence ID" value="NM_001164562.1"/>
</dbReference>
<dbReference type="RefSeq" id="NP_848792.2">
    <property type="nucleotide sequence ID" value="NM_178677.4"/>
</dbReference>
<dbReference type="RefSeq" id="XP_006512105.1">
    <property type="nucleotide sequence ID" value="XM_006512042.5"/>
</dbReference>
<dbReference type="RefSeq" id="XP_006512106.1">
    <property type="nucleotide sequence ID" value="XM_006512043.5"/>
</dbReference>
<dbReference type="SMR" id="Q8BXT9"/>
<dbReference type="FunCoup" id="Q8BXT9">
    <property type="interactions" value="1484"/>
</dbReference>
<dbReference type="STRING" id="10090.ENSMUSP00000077628"/>
<dbReference type="iPTMnet" id="Q8BXT9"/>
<dbReference type="PhosphoSitePlus" id="Q8BXT9"/>
<dbReference type="PaxDb" id="10090-ENSMUSP00000107185"/>
<dbReference type="ProteomicsDB" id="255342"/>
<dbReference type="Antibodypedia" id="29226">
    <property type="antibodies" value="38 antibodies from 16 providers"/>
</dbReference>
<dbReference type="DNASU" id="215474"/>
<dbReference type="Ensembl" id="ENSMUST00000078547.12">
    <property type="protein sequence ID" value="ENSMUSP00000077628.5"/>
    <property type="gene ID" value="ENSMUSG00000061536.14"/>
</dbReference>
<dbReference type="Ensembl" id="ENSMUST00000111560.10">
    <property type="protein sequence ID" value="ENSMUSP00000107185.3"/>
    <property type="gene ID" value="ENSMUSG00000061536.14"/>
</dbReference>
<dbReference type="GeneID" id="215474"/>
<dbReference type="KEGG" id="mmu:215474"/>
<dbReference type="UCSC" id="uc009sdm.2">
    <property type="organism name" value="mouse"/>
</dbReference>
<dbReference type="AGR" id="MGI:2447871"/>
<dbReference type="CTD" id="9117"/>
<dbReference type="MGI" id="MGI:2447871">
    <property type="gene designation" value="Sec22c"/>
</dbReference>
<dbReference type="VEuPathDB" id="HostDB:ENSMUSG00000061536"/>
<dbReference type="eggNOG" id="KOG0862">
    <property type="taxonomic scope" value="Eukaryota"/>
</dbReference>
<dbReference type="GeneTree" id="ENSGT00940000159338"/>
<dbReference type="HOGENOM" id="CLU_054453_0_0_1"/>
<dbReference type="InParanoid" id="Q8BXT9"/>
<dbReference type="OMA" id="QDRTNDC"/>
<dbReference type="OrthoDB" id="1719357at2759"/>
<dbReference type="PhylomeDB" id="Q8BXT9"/>
<dbReference type="TreeFam" id="TF105933"/>
<dbReference type="Reactome" id="R-MMU-204005">
    <property type="pathway name" value="COPII-mediated vesicle transport"/>
</dbReference>
<dbReference type="BioGRID-ORCS" id="215474">
    <property type="hits" value="0 hits in 77 CRISPR screens"/>
</dbReference>
<dbReference type="ChiTaRS" id="Sec22c">
    <property type="organism name" value="mouse"/>
</dbReference>
<dbReference type="PRO" id="PR:Q8BXT9"/>
<dbReference type="Proteomes" id="UP000000589">
    <property type="component" value="Chromosome 9"/>
</dbReference>
<dbReference type="RNAct" id="Q8BXT9">
    <property type="molecule type" value="protein"/>
</dbReference>
<dbReference type="Bgee" id="ENSMUSG00000061536">
    <property type="expression patterns" value="Expressed in granulocyte and 200 other cell types or tissues"/>
</dbReference>
<dbReference type="ExpressionAtlas" id="Q8BXT9">
    <property type="expression patterns" value="baseline and differential"/>
</dbReference>
<dbReference type="GO" id="GO:0005789">
    <property type="term" value="C:endoplasmic reticulum membrane"/>
    <property type="evidence" value="ECO:0007669"/>
    <property type="project" value="UniProtKB-SubCell"/>
</dbReference>
<dbReference type="GO" id="GO:0006888">
    <property type="term" value="P:endoplasmic reticulum to Golgi vesicle-mediated transport"/>
    <property type="evidence" value="ECO:0007669"/>
    <property type="project" value="InterPro"/>
</dbReference>
<dbReference type="GO" id="GO:0015031">
    <property type="term" value="P:protein transport"/>
    <property type="evidence" value="ECO:0007669"/>
    <property type="project" value="UniProtKB-KW"/>
</dbReference>
<dbReference type="CDD" id="cd14824">
    <property type="entry name" value="Longin"/>
    <property type="match status" value="1"/>
</dbReference>
<dbReference type="Gene3D" id="3.30.450.50">
    <property type="entry name" value="Longin domain"/>
    <property type="match status" value="1"/>
</dbReference>
<dbReference type="InterPro" id="IPR011012">
    <property type="entry name" value="Longin-like_dom_sf"/>
</dbReference>
<dbReference type="InterPro" id="IPR010908">
    <property type="entry name" value="Longin_dom"/>
</dbReference>
<dbReference type="InterPro" id="IPR043546">
    <property type="entry name" value="Sec22a/c"/>
</dbReference>
<dbReference type="PANTHER" id="PTHR46258">
    <property type="entry name" value="LONGIN DOMAIN-CONTAINING PROTEIN"/>
    <property type="match status" value="1"/>
</dbReference>
<dbReference type="PANTHER" id="PTHR46258:SF2">
    <property type="entry name" value="VESICLE-TRAFFICKING PROTEIN SEC22C"/>
    <property type="match status" value="1"/>
</dbReference>
<dbReference type="Pfam" id="PF13774">
    <property type="entry name" value="Longin"/>
    <property type="match status" value="1"/>
</dbReference>
<dbReference type="SMART" id="SM01270">
    <property type="entry name" value="Longin"/>
    <property type="match status" value="1"/>
</dbReference>
<dbReference type="SUPFAM" id="SSF64356">
    <property type="entry name" value="SNARE-like"/>
    <property type="match status" value="1"/>
</dbReference>
<dbReference type="PROSITE" id="PS50859">
    <property type="entry name" value="LONGIN"/>
    <property type="match status" value="1"/>
</dbReference>
<name>SC22C_MOUSE</name>
<sequence>MSMILFASIVRVRDGLPLSASTDFYYAQEFLECRRQLKTLAQRLARHPGRGCAESCDFLIYFSSSGDVACMAICSRQCPAAMAFCFLEALWWDFIASYDTTCVGLASRPYAFLEFDSVIQKTKWHFNHMSSSQMKSGLEKIQEELEFQPPAVLSLEDTDVANGMLNGHTPVHSEPAPNLRMKPVTALGVLSLVLNIMCAALNLIRGVHLAEHSLQVAQEEVGNILAFFIPSVACIVQCYLYLFYSPARTLKVLLMLASICLGNAYLHGLRNTWQILFHVGVAFLSSYQILTRQLQERQSDYGV</sequence>
<accession>Q8BXT9</accession>
<accession>Q8BMH4</accession>
<accession>Q8C0R8</accession>
<keyword id="KW-0256">Endoplasmic reticulum</keyword>
<keyword id="KW-0931">ER-Golgi transport</keyword>
<keyword id="KW-0472">Membrane</keyword>
<keyword id="KW-0653">Protein transport</keyword>
<keyword id="KW-1185">Reference proteome</keyword>
<keyword id="KW-0812">Transmembrane</keyword>
<keyword id="KW-1133">Transmembrane helix</keyword>
<keyword id="KW-0813">Transport</keyword>
<reference key="1">
    <citation type="journal article" date="2005" name="Science">
        <title>The transcriptional landscape of the mammalian genome.</title>
        <authorList>
            <person name="Carninci P."/>
            <person name="Kasukawa T."/>
            <person name="Katayama S."/>
            <person name="Gough J."/>
            <person name="Frith M.C."/>
            <person name="Maeda N."/>
            <person name="Oyama R."/>
            <person name="Ravasi T."/>
            <person name="Lenhard B."/>
            <person name="Wells C."/>
            <person name="Kodzius R."/>
            <person name="Shimokawa K."/>
            <person name="Bajic V.B."/>
            <person name="Brenner S.E."/>
            <person name="Batalov S."/>
            <person name="Forrest A.R."/>
            <person name="Zavolan M."/>
            <person name="Davis M.J."/>
            <person name="Wilming L.G."/>
            <person name="Aidinis V."/>
            <person name="Allen J.E."/>
            <person name="Ambesi-Impiombato A."/>
            <person name="Apweiler R."/>
            <person name="Aturaliya R.N."/>
            <person name="Bailey T.L."/>
            <person name="Bansal M."/>
            <person name="Baxter L."/>
            <person name="Beisel K.W."/>
            <person name="Bersano T."/>
            <person name="Bono H."/>
            <person name="Chalk A.M."/>
            <person name="Chiu K.P."/>
            <person name="Choudhary V."/>
            <person name="Christoffels A."/>
            <person name="Clutterbuck D.R."/>
            <person name="Crowe M.L."/>
            <person name="Dalla E."/>
            <person name="Dalrymple B.P."/>
            <person name="de Bono B."/>
            <person name="Della Gatta G."/>
            <person name="di Bernardo D."/>
            <person name="Down T."/>
            <person name="Engstrom P."/>
            <person name="Fagiolini M."/>
            <person name="Faulkner G."/>
            <person name="Fletcher C.F."/>
            <person name="Fukushima T."/>
            <person name="Furuno M."/>
            <person name="Futaki S."/>
            <person name="Gariboldi M."/>
            <person name="Georgii-Hemming P."/>
            <person name="Gingeras T.R."/>
            <person name="Gojobori T."/>
            <person name="Green R.E."/>
            <person name="Gustincich S."/>
            <person name="Harbers M."/>
            <person name="Hayashi Y."/>
            <person name="Hensch T.K."/>
            <person name="Hirokawa N."/>
            <person name="Hill D."/>
            <person name="Huminiecki L."/>
            <person name="Iacono M."/>
            <person name="Ikeo K."/>
            <person name="Iwama A."/>
            <person name="Ishikawa T."/>
            <person name="Jakt M."/>
            <person name="Kanapin A."/>
            <person name="Katoh M."/>
            <person name="Kawasawa Y."/>
            <person name="Kelso J."/>
            <person name="Kitamura H."/>
            <person name="Kitano H."/>
            <person name="Kollias G."/>
            <person name="Krishnan S.P."/>
            <person name="Kruger A."/>
            <person name="Kummerfeld S.K."/>
            <person name="Kurochkin I.V."/>
            <person name="Lareau L.F."/>
            <person name="Lazarevic D."/>
            <person name="Lipovich L."/>
            <person name="Liu J."/>
            <person name="Liuni S."/>
            <person name="McWilliam S."/>
            <person name="Madan Babu M."/>
            <person name="Madera M."/>
            <person name="Marchionni L."/>
            <person name="Matsuda H."/>
            <person name="Matsuzawa S."/>
            <person name="Miki H."/>
            <person name="Mignone F."/>
            <person name="Miyake S."/>
            <person name="Morris K."/>
            <person name="Mottagui-Tabar S."/>
            <person name="Mulder N."/>
            <person name="Nakano N."/>
            <person name="Nakauchi H."/>
            <person name="Ng P."/>
            <person name="Nilsson R."/>
            <person name="Nishiguchi S."/>
            <person name="Nishikawa S."/>
            <person name="Nori F."/>
            <person name="Ohara O."/>
            <person name="Okazaki Y."/>
            <person name="Orlando V."/>
            <person name="Pang K.C."/>
            <person name="Pavan W.J."/>
            <person name="Pavesi G."/>
            <person name="Pesole G."/>
            <person name="Petrovsky N."/>
            <person name="Piazza S."/>
            <person name="Reed J."/>
            <person name="Reid J.F."/>
            <person name="Ring B.Z."/>
            <person name="Ringwald M."/>
            <person name="Rost B."/>
            <person name="Ruan Y."/>
            <person name="Salzberg S.L."/>
            <person name="Sandelin A."/>
            <person name="Schneider C."/>
            <person name="Schoenbach C."/>
            <person name="Sekiguchi K."/>
            <person name="Semple C.A."/>
            <person name="Seno S."/>
            <person name="Sessa L."/>
            <person name="Sheng Y."/>
            <person name="Shibata Y."/>
            <person name="Shimada H."/>
            <person name="Shimada K."/>
            <person name="Silva D."/>
            <person name="Sinclair B."/>
            <person name="Sperling S."/>
            <person name="Stupka E."/>
            <person name="Sugiura K."/>
            <person name="Sultana R."/>
            <person name="Takenaka Y."/>
            <person name="Taki K."/>
            <person name="Tammoja K."/>
            <person name="Tan S.L."/>
            <person name="Tang S."/>
            <person name="Taylor M.S."/>
            <person name="Tegner J."/>
            <person name="Teichmann S.A."/>
            <person name="Ueda H.R."/>
            <person name="van Nimwegen E."/>
            <person name="Verardo R."/>
            <person name="Wei C.L."/>
            <person name="Yagi K."/>
            <person name="Yamanishi H."/>
            <person name="Zabarovsky E."/>
            <person name="Zhu S."/>
            <person name="Zimmer A."/>
            <person name="Hide W."/>
            <person name="Bult C."/>
            <person name="Grimmond S.M."/>
            <person name="Teasdale R.D."/>
            <person name="Liu E.T."/>
            <person name="Brusic V."/>
            <person name="Quackenbush J."/>
            <person name="Wahlestedt C."/>
            <person name="Mattick J.S."/>
            <person name="Hume D.A."/>
            <person name="Kai C."/>
            <person name="Sasaki D."/>
            <person name="Tomaru Y."/>
            <person name="Fukuda S."/>
            <person name="Kanamori-Katayama M."/>
            <person name="Suzuki M."/>
            <person name="Aoki J."/>
            <person name="Arakawa T."/>
            <person name="Iida J."/>
            <person name="Imamura K."/>
            <person name="Itoh M."/>
            <person name="Kato T."/>
            <person name="Kawaji H."/>
            <person name="Kawagashira N."/>
            <person name="Kawashima T."/>
            <person name="Kojima M."/>
            <person name="Kondo S."/>
            <person name="Konno H."/>
            <person name="Nakano K."/>
            <person name="Ninomiya N."/>
            <person name="Nishio T."/>
            <person name="Okada M."/>
            <person name="Plessy C."/>
            <person name="Shibata K."/>
            <person name="Shiraki T."/>
            <person name="Suzuki S."/>
            <person name="Tagami M."/>
            <person name="Waki K."/>
            <person name="Watahiki A."/>
            <person name="Okamura-Oho Y."/>
            <person name="Suzuki H."/>
            <person name="Kawai J."/>
            <person name="Hayashizaki Y."/>
        </authorList>
    </citation>
    <scope>NUCLEOTIDE SEQUENCE [LARGE SCALE MRNA]</scope>
    <source>
        <strain>C57BL/6J</strain>
        <tissue>Forelimb</tissue>
        <tissue>Retina</tissue>
        <tissue>Testis</tissue>
    </source>
</reference>
<reference key="2">
    <citation type="journal article" date="2004" name="Genome Res.">
        <title>The status, quality, and expansion of the NIH full-length cDNA project: the Mammalian Gene Collection (MGC).</title>
        <authorList>
            <consortium name="The MGC Project Team"/>
        </authorList>
    </citation>
    <scope>NUCLEOTIDE SEQUENCE [LARGE SCALE MRNA]</scope>
    <source>
        <tissue>Eye</tissue>
    </source>
</reference>
<proteinExistence type="evidence at transcript level"/>
<organism>
    <name type="scientific">Mus musculus</name>
    <name type="common">Mouse</name>
    <dbReference type="NCBI Taxonomy" id="10090"/>
    <lineage>
        <taxon>Eukaryota</taxon>
        <taxon>Metazoa</taxon>
        <taxon>Chordata</taxon>
        <taxon>Craniata</taxon>
        <taxon>Vertebrata</taxon>
        <taxon>Euteleostomi</taxon>
        <taxon>Mammalia</taxon>
        <taxon>Eutheria</taxon>
        <taxon>Euarchontoglires</taxon>
        <taxon>Glires</taxon>
        <taxon>Rodentia</taxon>
        <taxon>Myomorpha</taxon>
        <taxon>Muroidea</taxon>
        <taxon>Muridae</taxon>
        <taxon>Murinae</taxon>
        <taxon>Mus</taxon>
        <taxon>Mus</taxon>
    </lineage>
</organism>
<protein>
    <recommendedName>
        <fullName>Vesicle-trafficking protein SEC22c</fullName>
    </recommendedName>
    <alternativeName>
        <fullName>SEC22 vesicle trafficking protein-like 3</fullName>
    </alternativeName>
    <alternativeName>
        <fullName>SEC22 vesicle-trafficking protein homolog C</fullName>
    </alternativeName>
</protein>
<comment type="function">
    <text evidence="1">May be involved in vesicle transport between the ER and the Golgi complex.</text>
</comment>
<comment type="subcellular location">
    <subcellularLocation>
        <location evidence="1">Endoplasmic reticulum membrane</location>
        <topology evidence="1">Multi-pass membrane protein</topology>
    </subcellularLocation>
</comment>
<comment type="similarity">
    <text evidence="4">Belongs to the synaptobrevin family.</text>
</comment>
<evidence type="ECO:0000250" key="1"/>
<evidence type="ECO:0000255" key="2"/>
<evidence type="ECO:0000255" key="3">
    <source>
        <dbReference type="PROSITE-ProRule" id="PRU00231"/>
    </source>
</evidence>
<evidence type="ECO:0000305" key="4"/>